<accession>O35127</accession>
<accession>Q545G8</accession>
<sequence>MASASAQPAALSAEQAKVVLAEVIQAFSAPENAVRMDEARDNACNDMGKMLQFVLPVATQIQQEVIKAYGFSCDGEGVLKFARLVKSYEAQDPEIASLSGKLKALFLPPMTLPPHGPASGSSVAAS</sequence>
<protein>
    <recommendedName>
        <fullName>Protein C10</fullName>
    </recommendedName>
</protein>
<feature type="initiator methionine" description="Removed" evidence="2">
    <location>
        <position position="1"/>
    </location>
</feature>
<feature type="chain" id="PRO_0000065035" description="Protein C10">
    <location>
        <begin position="2"/>
        <end position="126"/>
    </location>
</feature>
<feature type="modified residue" description="N-acetylalanine" evidence="2">
    <location>
        <position position="2"/>
    </location>
</feature>
<keyword id="KW-0007">Acetylation</keyword>
<keyword id="KW-0963">Cytoplasm</keyword>
<keyword id="KW-1185">Reference proteome</keyword>
<evidence type="ECO:0000250" key="1"/>
<evidence type="ECO:0000250" key="2">
    <source>
        <dbReference type="UniProtKB" id="Q99622"/>
    </source>
</evidence>
<evidence type="ECO:0000269" key="3">
    <source>
    </source>
</evidence>
<evidence type="ECO:0000305" key="4"/>
<gene>
    <name type="primary">Grcc10</name>
    <name type="synonym">C10</name>
</gene>
<name>C10_MOUSE</name>
<dbReference type="EMBL" id="AC002397">
    <property type="protein sequence ID" value="AAC36004.1"/>
    <property type="molecule type" value="Genomic_DNA"/>
</dbReference>
<dbReference type="EMBL" id="AK009591">
    <property type="protein sequence ID" value="BAB26379.1"/>
    <property type="molecule type" value="mRNA"/>
</dbReference>
<dbReference type="EMBL" id="BC005683">
    <property type="protein sequence ID" value="AAH05683.1"/>
    <property type="molecule type" value="mRNA"/>
</dbReference>
<dbReference type="CCDS" id="CCDS20525.1"/>
<dbReference type="RefSeq" id="NP_038563.1">
    <property type="nucleotide sequence ID" value="NM_013535.2"/>
</dbReference>
<dbReference type="BioGRID" id="200051">
    <property type="interactions" value="3"/>
</dbReference>
<dbReference type="FunCoup" id="O35127">
    <property type="interactions" value="670"/>
</dbReference>
<dbReference type="IntAct" id="O35127">
    <property type="interactions" value="3"/>
</dbReference>
<dbReference type="MINT" id="O35127"/>
<dbReference type="STRING" id="10090.ENSMUSP00000004389"/>
<dbReference type="iPTMnet" id="O35127"/>
<dbReference type="PhosphoSitePlus" id="O35127"/>
<dbReference type="jPOST" id="O35127"/>
<dbReference type="PaxDb" id="10090-ENSMUSP00000004389"/>
<dbReference type="PeptideAtlas" id="O35127"/>
<dbReference type="ProteomicsDB" id="273782"/>
<dbReference type="Pumba" id="O35127"/>
<dbReference type="Antibodypedia" id="22799">
    <property type="antibodies" value="44 antibodies from 11 providers"/>
</dbReference>
<dbReference type="Ensembl" id="ENSMUST00000004389.6">
    <property type="protein sequence ID" value="ENSMUSP00000004389.6"/>
    <property type="gene ID" value="ENSMUSG00000072772.4"/>
</dbReference>
<dbReference type="GeneID" id="14790"/>
<dbReference type="KEGG" id="mmu:14790"/>
<dbReference type="UCSC" id="uc009drn.1">
    <property type="organism name" value="mouse"/>
</dbReference>
<dbReference type="AGR" id="MGI:1315201"/>
<dbReference type="CTD" id="14790"/>
<dbReference type="MGI" id="MGI:1315201">
    <property type="gene designation" value="Grcc10"/>
</dbReference>
<dbReference type="VEuPathDB" id="HostDB:ENSMUSG00000072772"/>
<dbReference type="eggNOG" id="ENOG502S2W0">
    <property type="taxonomic scope" value="Eukaryota"/>
</dbReference>
<dbReference type="GeneTree" id="ENSGT00390000005242"/>
<dbReference type="HOGENOM" id="CLU_144250_1_0_1"/>
<dbReference type="InParanoid" id="O35127"/>
<dbReference type="OMA" id="GNDMMKM"/>
<dbReference type="OrthoDB" id="75738at2759"/>
<dbReference type="PhylomeDB" id="O35127"/>
<dbReference type="TreeFam" id="TF323852"/>
<dbReference type="BioGRID-ORCS" id="14790">
    <property type="hits" value="2 hits in 76 CRISPR screens"/>
</dbReference>
<dbReference type="ChiTaRS" id="Grcc10">
    <property type="organism name" value="mouse"/>
</dbReference>
<dbReference type="PRO" id="PR:O35127"/>
<dbReference type="Proteomes" id="UP000000589">
    <property type="component" value="Chromosome 6"/>
</dbReference>
<dbReference type="RNAct" id="O35127">
    <property type="molecule type" value="protein"/>
</dbReference>
<dbReference type="Bgee" id="ENSMUSG00000072772">
    <property type="expression patterns" value="Expressed in embryonic brain and 175 other cell types or tissues"/>
</dbReference>
<dbReference type="GO" id="GO:0005737">
    <property type="term" value="C:cytoplasm"/>
    <property type="evidence" value="ECO:0007669"/>
    <property type="project" value="UniProtKB-SubCell"/>
</dbReference>
<dbReference type="GO" id="GO:0016607">
    <property type="term" value="C:nuclear speck"/>
    <property type="evidence" value="ECO:0007669"/>
    <property type="project" value="Ensembl"/>
</dbReference>
<dbReference type="GO" id="GO:0048593">
    <property type="term" value="P:camera-type eye morphogenesis"/>
    <property type="evidence" value="ECO:0007669"/>
    <property type="project" value="Ensembl"/>
</dbReference>
<dbReference type="GO" id="GO:0050890">
    <property type="term" value="P:cognition"/>
    <property type="evidence" value="ECO:0007669"/>
    <property type="project" value="Ensembl"/>
</dbReference>
<dbReference type="GO" id="GO:0021540">
    <property type="term" value="P:corpus callosum morphogenesis"/>
    <property type="evidence" value="ECO:0007669"/>
    <property type="project" value="Ensembl"/>
</dbReference>
<dbReference type="GO" id="GO:0009791">
    <property type="term" value="P:post-embryonic development"/>
    <property type="evidence" value="ECO:0007669"/>
    <property type="project" value="Ensembl"/>
</dbReference>
<dbReference type="GO" id="GO:0036343">
    <property type="term" value="P:psychomotor behavior"/>
    <property type="evidence" value="ECO:0007669"/>
    <property type="project" value="Ensembl"/>
</dbReference>
<dbReference type="GO" id="GO:0014819">
    <property type="term" value="P:regulation of skeletal muscle contraction"/>
    <property type="evidence" value="ECO:0007669"/>
    <property type="project" value="Ensembl"/>
</dbReference>
<dbReference type="GO" id="GO:0021678">
    <property type="term" value="P:third ventricle development"/>
    <property type="evidence" value="ECO:0007669"/>
    <property type="project" value="Ensembl"/>
</dbReference>
<dbReference type="InterPro" id="IPR026317">
    <property type="entry name" value="P_C10"/>
</dbReference>
<dbReference type="PANTHER" id="PTHR13463">
    <property type="entry name" value="PROTEIN C10"/>
    <property type="match status" value="1"/>
</dbReference>
<dbReference type="PANTHER" id="PTHR13463:SF3">
    <property type="entry name" value="PROTEIN C10"/>
    <property type="match status" value="1"/>
</dbReference>
<dbReference type="Pfam" id="PF14974">
    <property type="entry name" value="P_C10"/>
    <property type="match status" value="1"/>
</dbReference>
<organism>
    <name type="scientific">Mus musculus</name>
    <name type="common">Mouse</name>
    <dbReference type="NCBI Taxonomy" id="10090"/>
    <lineage>
        <taxon>Eukaryota</taxon>
        <taxon>Metazoa</taxon>
        <taxon>Chordata</taxon>
        <taxon>Craniata</taxon>
        <taxon>Vertebrata</taxon>
        <taxon>Euteleostomi</taxon>
        <taxon>Mammalia</taxon>
        <taxon>Eutheria</taxon>
        <taxon>Euarchontoglires</taxon>
        <taxon>Glires</taxon>
        <taxon>Rodentia</taxon>
        <taxon>Myomorpha</taxon>
        <taxon>Muroidea</taxon>
        <taxon>Muridae</taxon>
        <taxon>Murinae</taxon>
        <taxon>Mus</taxon>
        <taxon>Mus</taxon>
    </lineage>
</organism>
<proteinExistence type="evidence at protein level"/>
<reference key="1">
    <citation type="submission" date="1997-08" db="EMBL/GenBank/DDBJ databases">
        <title>Comparative sequence analysis of a gene-rich cluster at human chromosome 12p13 and its syntetic region in mouse chromosome 6.</title>
        <authorList>
            <person name="Ansari-Lari M.A."/>
            <person name="Oeltjen J.C."/>
            <person name="Schwartz S."/>
            <person name="Zhang Z."/>
            <person name="Muzny D.M."/>
            <person name="Lu J."/>
            <person name="Gorrell J.H."/>
            <person name="Chinault A.C."/>
            <person name="Belmont J.W."/>
            <person name="Miller W."/>
            <person name="Gibbs R.A."/>
        </authorList>
    </citation>
    <scope>NUCLEOTIDE SEQUENCE [GENOMIC DNA]</scope>
</reference>
<reference key="2">
    <citation type="journal article" date="2005" name="Science">
        <title>The transcriptional landscape of the mammalian genome.</title>
        <authorList>
            <person name="Carninci P."/>
            <person name="Kasukawa T."/>
            <person name="Katayama S."/>
            <person name="Gough J."/>
            <person name="Frith M.C."/>
            <person name="Maeda N."/>
            <person name="Oyama R."/>
            <person name="Ravasi T."/>
            <person name="Lenhard B."/>
            <person name="Wells C."/>
            <person name="Kodzius R."/>
            <person name="Shimokawa K."/>
            <person name="Bajic V.B."/>
            <person name="Brenner S.E."/>
            <person name="Batalov S."/>
            <person name="Forrest A.R."/>
            <person name="Zavolan M."/>
            <person name="Davis M.J."/>
            <person name="Wilming L.G."/>
            <person name="Aidinis V."/>
            <person name="Allen J.E."/>
            <person name="Ambesi-Impiombato A."/>
            <person name="Apweiler R."/>
            <person name="Aturaliya R.N."/>
            <person name="Bailey T.L."/>
            <person name="Bansal M."/>
            <person name="Baxter L."/>
            <person name="Beisel K.W."/>
            <person name="Bersano T."/>
            <person name="Bono H."/>
            <person name="Chalk A.M."/>
            <person name="Chiu K.P."/>
            <person name="Choudhary V."/>
            <person name="Christoffels A."/>
            <person name="Clutterbuck D.R."/>
            <person name="Crowe M.L."/>
            <person name="Dalla E."/>
            <person name="Dalrymple B.P."/>
            <person name="de Bono B."/>
            <person name="Della Gatta G."/>
            <person name="di Bernardo D."/>
            <person name="Down T."/>
            <person name="Engstrom P."/>
            <person name="Fagiolini M."/>
            <person name="Faulkner G."/>
            <person name="Fletcher C.F."/>
            <person name="Fukushima T."/>
            <person name="Furuno M."/>
            <person name="Futaki S."/>
            <person name="Gariboldi M."/>
            <person name="Georgii-Hemming P."/>
            <person name="Gingeras T.R."/>
            <person name="Gojobori T."/>
            <person name="Green R.E."/>
            <person name="Gustincich S."/>
            <person name="Harbers M."/>
            <person name="Hayashi Y."/>
            <person name="Hensch T.K."/>
            <person name="Hirokawa N."/>
            <person name="Hill D."/>
            <person name="Huminiecki L."/>
            <person name="Iacono M."/>
            <person name="Ikeo K."/>
            <person name="Iwama A."/>
            <person name="Ishikawa T."/>
            <person name="Jakt M."/>
            <person name="Kanapin A."/>
            <person name="Katoh M."/>
            <person name="Kawasawa Y."/>
            <person name="Kelso J."/>
            <person name="Kitamura H."/>
            <person name="Kitano H."/>
            <person name="Kollias G."/>
            <person name="Krishnan S.P."/>
            <person name="Kruger A."/>
            <person name="Kummerfeld S.K."/>
            <person name="Kurochkin I.V."/>
            <person name="Lareau L.F."/>
            <person name="Lazarevic D."/>
            <person name="Lipovich L."/>
            <person name="Liu J."/>
            <person name="Liuni S."/>
            <person name="McWilliam S."/>
            <person name="Madan Babu M."/>
            <person name="Madera M."/>
            <person name="Marchionni L."/>
            <person name="Matsuda H."/>
            <person name="Matsuzawa S."/>
            <person name="Miki H."/>
            <person name="Mignone F."/>
            <person name="Miyake S."/>
            <person name="Morris K."/>
            <person name="Mottagui-Tabar S."/>
            <person name="Mulder N."/>
            <person name="Nakano N."/>
            <person name="Nakauchi H."/>
            <person name="Ng P."/>
            <person name="Nilsson R."/>
            <person name="Nishiguchi S."/>
            <person name="Nishikawa S."/>
            <person name="Nori F."/>
            <person name="Ohara O."/>
            <person name="Okazaki Y."/>
            <person name="Orlando V."/>
            <person name="Pang K.C."/>
            <person name="Pavan W.J."/>
            <person name="Pavesi G."/>
            <person name="Pesole G."/>
            <person name="Petrovsky N."/>
            <person name="Piazza S."/>
            <person name="Reed J."/>
            <person name="Reid J.F."/>
            <person name="Ring B.Z."/>
            <person name="Ringwald M."/>
            <person name="Rost B."/>
            <person name="Ruan Y."/>
            <person name="Salzberg S.L."/>
            <person name="Sandelin A."/>
            <person name="Schneider C."/>
            <person name="Schoenbach C."/>
            <person name="Sekiguchi K."/>
            <person name="Semple C.A."/>
            <person name="Seno S."/>
            <person name="Sessa L."/>
            <person name="Sheng Y."/>
            <person name="Shibata Y."/>
            <person name="Shimada H."/>
            <person name="Shimada K."/>
            <person name="Silva D."/>
            <person name="Sinclair B."/>
            <person name="Sperling S."/>
            <person name="Stupka E."/>
            <person name="Sugiura K."/>
            <person name="Sultana R."/>
            <person name="Takenaka Y."/>
            <person name="Taki K."/>
            <person name="Tammoja K."/>
            <person name="Tan S.L."/>
            <person name="Tang S."/>
            <person name="Taylor M.S."/>
            <person name="Tegner J."/>
            <person name="Teichmann S.A."/>
            <person name="Ueda H.R."/>
            <person name="van Nimwegen E."/>
            <person name="Verardo R."/>
            <person name="Wei C.L."/>
            <person name="Yagi K."/>
            <person name="Yamanishi H."/>
            <person name="Zabarovsky E."/>
            <person name="Zhu S."/>
            <person name="Zimmer A."/>
            <person name="Hide W."/>
            <person name="Bult C."/>
            <person name="Grimmond S.M."/>
            <person name="Teasdale R.D."/>
            <person name="Liu E.T."/>
            <person name="Brusic V."/>
            <person name="Quackenbush J."/>
            <person name="Wahlestedt C."/>
            <person name="Mattick J.S."/>
            <person name="Hume D.A."/>
            <person name="Kai C."/>
            <person name="Sasaki D."/>
            <person name="Tomaru Y."/>
            <person name="Fukuda S."/>
            <person name="Kanamori-Katayama M."/>
            <person name="Suzuki M."/>
            <person name="Aoki J."/>
            <person name="Arakawa T."/>
            <person name="Iida J."/>
            <person name="Imamura K."/>
            <person name="Itoh M."/>
            <person name="Kato T."/>
            <person name="Kawaji H."/>
            <person name="Kawagashira N."/>
            <person name="Kawashima T."/>
            <person name="Kojima M."/>
            <person name="Kondo S."/>
            <person name="Konno H."/>
            <person name="Nakano K."/>
            <person name="Ninomiya N."/>
            <person name="Nishio T."/>
            <person name="Okada M."/>
            <person name="Plessy C."/>
            <person name="Shibata K."/>
            <person name="Shiraki T."/>
            <person name="Suzuki S."/>
            <person name="Tagami M."/>
            <person name="Waki K."/>
            <person name="Watahiki A."/>
            <person name="Okamura-Oho Y."/>
            <person name="Suzuki H."/>
            <person name="Kawai J."/>
            <person name="Hayashizaki Y."/>
        </authorList>
    </citation>
    <scope>NUCLEOTIDE SEQUENCE [LARGE SCALE MRNA]</scope>
    <source>
        <strain>C57BL/6J</strain>
        <tissue>Tongue</tissue>
    </source>
</reference>
<reference key="3">
    <citation type="journal article" date="2004" name="Genome Res.">
        <title>The status, quality, and expansion of the NIH full-length cDNA project: the Mammalian Gene Collection (MGC).</title>
        <authorList>
            <consortium name="The MGC Project Team"/>
        </authorList>
    </citation>
    <scope>NUCLEOTIDE SEQUENCE [LARGE SCALE MRNA]</scope>
    <source>
        <strain>129</strain>
        <tissue>Mammary gland</tissue>
    </source>
</reference>
<reference key="4">
    <citation type="journal article" date="2010" name="Cell">
        <title>A tissue-specific atlas of mouse protein phosphorylation and expression.</title>
        <authorList>
            <person name="Huttlin E.L."/>
            <person name="Jedrychowski M.P."/>
            <person name="Elias J.E."/>
            <person name="Goswami T."/>
            <person name="Rad R."/>
            <person name="Beausoleil S.A."/>
            <person name="Villen J."/>
            <person name="Haas W."/>
            <person name="Sowa M.E."/>
            <person name="Gygi S.P."/>
        </authorList>
    </citation>
    <scope>IDENTIFICATION BY MASS SPECTROMETRY [LARGE SCALE ANALYSIS]</scope>
    <source>
        <tissue>Brain</tissue>
        <tissue>Brown adipose tissue</tissue>
        <tissue>Heart</tissue>
        <tissue>Kidney</tissue>
        <tissue>Lung</tissue>
        <tissue>Pancreas</tissue>
        <tissue>Spleen</tissue>
        <tissue>Testis</tissue>
    </source>
</reference>
<reference key="5">
    <citation type="journal article" date="2013" name="Am. J. Hum. Genet.">
        <title>Mutations in c12orf57 cause a syndromic form of colobomatous microphthalmia.</title>
        <authorList>
            <person name="Zahrani F."/>
            <person name="Aldahmesh M.A."/>
            <person name="Alshammari M.J."/>
            <person name="Al-Hazzaa S.A."/>
            <person name="Alkuraya F.S."/>
        </authorList>
    </citation>
    <scope>TISSUE SPECIFICITY</scope>
    <scope>DEVELOPMENTAL STAGE</scope>
</reference>
<comment type="function">
    <text evidence="1">In brain, may be required for corpus callosum development.</text>
</comment>
<comment type="subcellular location">
    <subcellularLocation>
        <location evidence="1">Cytoplasm</location>
    </subcellularLocation>
</comment>
<comment type="tissue specificity">
    <text evidence="3">Ubiquitously expressed, with higher expression in lung.</text>
</comment>
<comment type="developmental stage">
    <text evidence="3">Detected as early as 10.5 dpc.</text>
</comment>
<comment type="similarity">
    <text evidence="4">Belongs to the UPF0456 family.</text>
</comment>